<accession>A4K148</accession>
<keyword id="KW-0025">Alternative splicing</keyword>
<keyword id="KW-1048">Host nucleus</keyword>
<keyword id="KW-0945">Host-virus interaction</keyword>
<keyword id="KW-0813">Transport</keyword>
<keyword id="KW-0946">Virion</keyword>
<dbReference type="EMBL" id="CY021057">
    <property type="protein sequence ID" value="ABO52286.1"/>
    <property type="molecule type" value="Viral_cRNA"/>
</dbReference>
<dbReference type="SMR" id="A4K148"/>
<dbReference type="Proteomes" id="UP000008219">
    <property type="component" value="Genome"/>
</dbReference>
<dbReference type="GO" id="GO:0042025">
    <property type="term" value="C:host cell nucleus"/>
    <property type="evidence" value="ECO:0007669"/>
    <property type="project" value="UniProtKB-SubCell"/>
</dbReference>
<dbReference type="GO" id="GO:0044423">
    <property type="term" value="C:virion component"/>
    <property type="evidence" value="ECO:0007669"/>
    <property type="project" value="UniProtKB-UniRule"/>
</dbReference>
<dbReference type="GO" id="GO:0039675">
    <property type="term" value="P:exit of virus from host cell nucleus through nuclear pore"/>
    <property type="evidence" value="ECO:0007669"/>
    <property type="project" value="UniProtKB-UniRule"/>
</dbReference>
<dbReference type="Gene3D" id="1.10.287.230">
    <property type="match status" value="1"/>
</dbReference>
<dbReference type="Gene3D" id="1.10.287.10">
    <property type="entry name" value="S15/NS1, RNA-binding"/>
    <property type="match status" value="1"/>
</dbReference>
<dbReference type="HAMAP" id="MF_04067">
    <property type="entry name" value="INFV_NEP"/>
    <property type="match status" value="1"/>
</dbReference>
<dbReference type="InterPro" id="IPR000968">
    <property type="entry name" value="Flu_NS2"/>
</dbReference>
<dbReference type="Pfam" id="PF00601">
    <property type="entry name" value="Flu_NS2"/>
    <property type="match status" value="1"/>
</dbReference>
<dbReference type="SUPFAM" id="SSF101156">
    <property type="entry name" value="Nonstructural protein ns2, Nep, M1-binding domain"/>
    <property type="match status" value="1"/>
</dbReference>
<feature type="chain" id="PRO_0000372954" description="Nuclear export protein">
    <location>
        <begin position="1"/>
        <end position="121"/>
    </location>
</feature>
<feature type="short sequence motif" description="Nuclear export signal" evidence="1">
    <location>
        <begin position="12"/>
        <end position="21"/>
    </location>
</feature>
<feature type="short sequence motif" description="Nuclear export signal" evidence="1">
    <location>
        <begin position="85"/>
        <end position="94"/>
    </location>
</feature>
<organism>
    <name type="scientific">Influenza A virus (strain A/Malaysia:Malaya/302/1954 H1N1)</name>
    <dbReference type="NCBI Taxonomy" id="425566"/>
    <lineage>
        <taxon>Viruses</taxon>
        <taxon>Riboviria</taxon>
        <taxon>Orthornavirae</taxon>
        <taxon>Negarnaviricota</taxon>
        <taxon>Polyploviricotina</taxon>
        <taxon>Insthoviricetes</taxon>
        <taxon>Articulavirales</taxon>
        <taxon>Orthomyxoviridae</taxon>
        <taxon>Alphainfluenzavirus</taxon>
        <taxon>Alphainfluenzavirus influenzae</taxon>
        <taxon>Influenza A virus</taxon>
    </lineage>
</organism>
<reference key="1">
    <citation type="submission" date="2007-03" db="EMBL/GenBank/DDBJ databases">
        <title>The NIAID influenza genome sequencing project.</title>
        <authorList>
            <person name="Ghedin E."/>
            <person name="Spiro D."/>
            <person name="Miller N."/>
            <person name="Zaborsky J."/>
            <person name="Feldblyum T."/>
            <person name="Subbu V."/>
            <person name="Shumway M."/>
            <person name="Sparenborg J."/>
            <person name="Groveman L."/>
            <person name="Halpin R."/>
            <person name="Sitz J."/>
            <person name="Koo H."/>
            <person name="Salzberg S.L."/>
            <person name="Webster R.G."/>
            <person name="Hoffmann E."/>
            <person name="Krauss S."/>
            <person name="Naeve C."/>
            <person name="Bao Y."/>
            <person name="Bolotov P."/>
            <person name="Dernovoy D."/>
            <person name="Kiryutin B."/>
            <person name="Lipman D.J."/>
            <person name="Tatusova T."/>
        </authorList>
    </citation>
    <scope>NUCLEOTIDE SEQUENCE [GENOMIC RNA]</scope>
</reference>
<reference key="2">
    <citation type="submission" date="2007-03" db="EMBL/GenBank/DDBJ databases">
        <authorList>
            <consortium name="The NIAID Influenza Genome Sequencing Consortium"/>
        </authorList>
    </citation>
    <scope>NUCLEOTIDE SEQUENCE [GENOMIC RNA]</scope>
</reference>
<organismHost>
    <name type="scientific">Aves</name>
    <dbReference type="NCBI Taxonomy" id="8782"/>
</organismHost>
<organismHost>
    <name type="scientific">Homo sapiens</name>
    <name type="common">Human</name>
    <dbReference type="NCBI Taxonomy" id="9606"/>
</organismHost>
<organismHost>
    <name type="scientific">Sus scrofa</name>
    <name type="common">Pig</name>
    <dbReference type="NCBI Taxonomy" id="9823"/>
</organismHost>
<proteinExistence type="inferred from homology"/>
<protein>
    <recommendedName>
        <fullName evidence="1">Nuclear export protein</fullName>
        <shortName evidence="1">NEP</shortName>
    </recommendedName>
    <alternativeName>
        <fullName evidence="1">Non-structural protein 2</fullName>
        <shortName evidence="1">NS2</shortName>
    </alternativeName>
</protein>
<sequence length="121" mass="14351">MDPNTVSSFQDILMRMSKMQLGSSSEDLNGMITQFESLKLYRDSLGEAVMRMGDLHSLQNRNGKWREQLGQKFEEIRWLIEEVRHKLKITENSFEQITFMQALQLLFEVEQEIRTFSFQLI</sequence>
<name>NEP_I54A2</name>
<gene>
    <name evidence="1" type="primary">NS</name>
</gene>
<evidence type="ECO:0000255" key="1">
    <source>
        <dbReference type="HAMAP-Rule" id="MF_04067"/>
    </source>
</evidence>
<comment type="function">
    <text evidence="1">Mediates the nuclear export of encapsidated genomic RNAs (ribonucleoproteins, RNPs). Acts as an adapter between viral RNPs complexes and the nuclear export machinery of the cell. Possesses no intrinsic RNA-binding activity, but includes a C-terminal M1-binding domain. This domain is believed to allow recognition of RNPs bound to the protein M1. Since protein M1 is not available in large quantities before late stages of infection, such an indirect recognition mechanism probably ensures that genomic RNPs are not exported from the host nucleus until sufficient quantities of viral mRNA and progeny genomic RNA have been synthesized. Furthermore, the RNPs enter the host cytoplasm only when associated with the M1 protein that is necessary to guide them to the plasma membrane. May down-regulate viral RNA synthesis when overproduced.</text>
</comment>
<comment type="subunit">
    <text evidence="1">Interacts with protein M1. May interact with host nucleoporin RAB/HRB and exportin XPO1/CRM1.</text>
</comment>
<comment type="subcellular location">
    <subcellularLocation>
        <location evidence="1">Virion</location>
    </subcellularLocation>
    <subcellularLocation>
        <location evidence="1">Host nucleus</location>
    </subcellularLocation>
</comment>
<comment type="alternative products">
    <event type="alternative splicing"/>
    <isoform>
        <id>A4K148-1</id>
        <name>NEP</name>
        <name>NS2</name>
        <sequence type="displayed"/>
    </isoform>
    <isoform>
        <id>A4K149-1</id>
        <name>NS1</name>
        <sequence type="external"/>
    </isoform>
</comment>
<comment type="miscellaneous">
    <text>Average number present in a viral particle is estimated to be 130-200 molecules.</text>
</comment>
<comment type="similarity">
    <text evidence="1">Belongs to the influenza viruses NEP family.</text>
</comment>